<dbReference type="EMBL" id="AY026332">
    <property type="protein sequence ID" value="AAK08983.1"/>
    <property type="molecule type" value="mRNA"/>
</dbReference>
<dbReference type="EMBL" id="DP000010">
    <property type="protein sequence ID" value="ABA95299.1"/>
    <property type="molecule type" value="Genomic_DNA"/>
</dbReference>
<dbReference type="EMBL" id="AP008217">
    <property type="protein sequence ID" value="BAF28829.2"/>
    <property type="molecule type" value="Genomic_DNA"/>
</dbReference>
<dbReference type="EMBL" id="AP014967">
    <property type="protein sequence ID" value="BAT15264.1"/>
    <property type="molecule type" value="Genomic_DNA"/>
</dbReference>
<dbReference type="RefSeq" id="XP_015618000.1">
    <property type="nucleotide sequence ID" value="XM_015762514.1"/>
</dbReference>
<dbReference type="SMR" id="Q2QZJ8"/>
<dbReference type="FunCoup" id="Q2QZJ8">
    <property type="interactions" value="19"/>
</dbReference>
<dbReference type="STRING" id="39947.Q2QZJ8"/>
<dbReference type="PaxDb" id="39947-Q2QZJ8"/>
<dbReference type="EnsemblPlants" id="Os11t0684000-01">
    <property type="protein sequence ID" value="Os11t0684000-01"/>
    <property type="gene ID" value="Os11g0684000"/>
</dbReference>
<dbReference type="Gramene" id="Os11t0684000-01">
    <property type="protein sequence ID" value="Os11t0684000-01"/>
    <property type="gene ID" value="Os11g0684000"/>
</dbReference>
<dbReference type="KEGG" id="dosa:Os11g0684000"/>
<dbReference type="eggNOG" id="KOG0048">
    <property type="taxonomic scope" value="Eukaryota"/>
</dbReference>
<dbReference type="HOGENOM" id="CLU_028567_8_2_1"/>
<dbReference type="InParanoid" id="Q2QZJ8"/>
<dbReference type="OMA" id="MMAMPRA"/>
<dbReference type="OrthoDB" id="2143914at2759"/>
<dbReference type="Proteomes" id="UP000000763">
    <property type="component" value="Chromosome 11"/>
</dbReference>
<dbReference type="Proteomes" id="UP000059680">
    <property type="component" value="Chromosome 11"/>
</dbReference>
<dbReference type="GO" id="GO:0005634">
    <property type="term" value="C:nucleus"/>
    <property type="evidence" value="ECO:0000318"/>
    <property type="project" value="GO_Central"/>
</dbReference>
<dbReference type="GO" id="GO:0003700">
    <property type="term" value="F:DNA-binding transcription factor activity"/>
    <property type="evidence" value="ECO:0007669"/>
    <property type="project" value="InterPro"/>
</dbReference>
<dbReference type="GO" id="GO:0043565">
    <property type="term" value="F:sequence-specific DNA binding"/>
    <property type="evidence" value="ECO:0000318"/>
    <property type="project" value="GO_Central"/>
</dbReference>
<dbReference type="GO" id="GO:0006952">
    <property type="term" value="P:defense response"/>
    <property type="evidence" value="ECO:0007669"/>
    <property type="project" value="UniProtKB-KW"/>
</dbReference>
<dbReference type="GO" id="GO:0006355">
    <property type="term" value="P:regulation of DNA-templated transcription"/>
    <property type="evidence" value="ECO:0000318"/>
    <property type="project" value="GO_Central"/>
</dbReference>
<dbReference type="CDD" id="cd00167">
    <property type="entry name" value="SANT"/>
    <property type="match status" value="2"/>
</dbReference>
<dbReference type="FunFam" id="1.10.10.60:FF:000107">
    <property type="entry name" value="MYB transcription factor"/>
    <property type="match status" value="1"/>
</dbReference>
<dbReference type="FunFam" id="1.10.10.60:FF:000011">
    <property type="entry name" value="Myb transcription factor"/>
    <property type="match status" value="1"/>
</dbReference>
<dbReference type="Gene3D" id="1.10.10.60">
    <property type="entry name" value="Homeodomain-like"/>
    <property type="match status" value="2"/>
</dbReference>
<dbReference type="InterPro" id="IPR044676">
    <property type="entry name" value="EOBI/EOBII-like_plant"/>
</dbReference>
<dbReference type="InterPro" id="IPR009057">
    <property type="entry name" value="Homeodomain-like_sf"/>
</dbReference>
<dbReference type="InterPro" id="IPR017930">
    <property type="entry name" value="Myb_dom"/>
</dbReference>
<dbReference type="InterPro" id="IPR001005">
    <property type="entry name" value="SANT/Myb"/>
</dbReference>
<dbReference type="PANTHER" id="PTHR45675">
    <property type="entry name" value="MYB TRANSCRIPTION FACTOR-RELATED-RELATED"/>
    <property type="match status" value="1"/>
</dbReference>
<dbReference type="PANTHER" id="PTHR45675:SF38">
    <property type="entry name" value="TRANSCRIPTION FACTOR JAMYB"/>
    <property type="match status" value="1"/>
</dbReference>
<dbReference type="Pfam" id="PF00249">
    <property type="entry name" value="Myb_DNA-binding"/>
    <property type="match status" value="2"/>
</dbReference>
<dbReference type="SMART" id="SM00717">
    <property type="entry name" value="SANT"/>
    <property type="match status" value="2"/>
</dbReference>
<dbReference type="SUPFAM" id="SSF46689">
    <property type="entry name" value="Homeodomain-like"/>
    <property type="match status" value="1"/>
</dbReference>
<dbReference type="PROSITE" id="PS51294">
    <property type="entry name" value="HTH_MYB"/>
    <property type="match status" value="2"/>
</dbReference>
<evidence type="ECO:0000255" key="1">
    <source>
        <dbReference type="PROSITE-ProRule" id="PRU00625"/>
    </source>
</evidence>
<evidence type="ECO:0000269" key="2">
    <source>
    </source>
</evidence>
<evidence type="ECO:0000303" key="3">
    <source>
    </source>
</evidence>
<evidence type="ECO:0000305" key="4"/>
<evidence type="ECO:0000312" key="5">
    <source>
        <dbReference type="EMBL" id="ABA95299.1"/>
    </source>
</evidence>
<evidence type="ECO:0000312" key="6">
    <source>
        <dbReference type="EMBL" id="BAF28829.2"/>
    </source>
</evidence>
<reference key="1">
    <citation type="journal article" date="2001" name="Mol. Plant Microbe Interact.">
        <title>A novel jasmonic acid-inducible rice myb gene associates with fungal infection and host cell death.</title>
        <authorList>
            <person name="Lee M.W."/>
            <person name="Qi M."/>
            <person name="Yang Y."/>
        </authorList>
    </citation>
    <scope>NUCLEOTIDE SEQUENCE [MRNA]</scope>
    <scope>FUNCTION</scope>
    <scope>INDUCTION</scope>
</reference>
<reference key="2">
    <citation type="journal article" date="2005" name="BMC Biol.">
        <title>The sequence of rice chromosomes 11 and 12, rich in disease resistance genes and recent gene duplications.</title>
        <authorList>
            <consortium name="The rice chromosomes 11 and 12 sequencing consortia"/>
        </authorList>
    </citation>
    <scope>NUCLEOTIDE SEQUENCE [LARGE SCALE GENOMIC DNA]</scope>
    <source>
        <strain>cv. Nipponbare</strain>
    </source>
</reference>
<reference key="3">
    <citation type="journal article" date="2005" name="Nature">
        <title>The map-based sequence of the rice genome.</title>
        <authorList>
            <consortium name="International rice genome sequencing project (IRGSP)"/>
        </authorList>
    </citation>
    <scope>NUCLEOTIDE SEQUENCE [LARGE SCALE GENOMIC DNA]</scope>
    <source>
        <strain>cv. Nipponbare</strain>
    </source>
</reference>
<reference key="4">
    <citation type="journal article" date="2008" name="Nucleic Acids Res.">
        <title>The rice annotation project database (RAP-DB): 2008 update.</title>
        <authorList>
            <consortium name="The rice annotation project (RAP)"/>
        </authorList>
    </citation>
    <scope>GENOME REANNOTATION</scope>
    <source>
        <strain>cv. Nipponbare</strain>
    </source>
</reference>
<reference key="5">
    <citation type="journal article" date="2013" name="Rice">
        <title>Improvement of the Oryza sativa Nipponbare reference genome using next generation sequence and optical map data.</title>
        <authorList>
            <person name="Kawahara Y."/>
            <person name="de la Bastide M."/>
            <person name="Hamilton J.P."/>
            <person name="Kanamori H."/>
            <person name="McCombie W.R."/>
            <person name="Ouyang S."/>
            <person name="Schwartz D.C."/>
            <person name="Tanaka T."/>
            <person name="Wu J."/>
            <person name="Zhou S."/>
            <person name="Childs K.L."/>
            <person name="Davidson R.M."/>
            <person name="Lin H."/>
            <person name="Quesada-Ocampo L."/>
            <person name="Vaillancourt B."/>
            <person name="Sakai H."/>
            <person name="Lee S.S."/>
            <person name="Kim J."/>
            <person name="Numa H."/>
            <person name="Itoh T."/>
            <person name="Buell C.R."/>
            <person name="Matsumoto T."/>
        </authorList>
    </citation>
    <scope>GENOME REANNOTATION</scope>
    <source>
        <strain>cv. Nipponbare</strain>
    </source>
</reference>
<sequence>MEMVLQRTSHHPVPGEQQEAAAELSSAELRRGPWTVDEDLTLINYISDHGEGRWNALARAAGLKRTGKSCRLRWLNYLRPDVKRGNFTAEEQLLILDLHSRWGNRWSKIAQHLPGRTDNEIKNYWRTRVQKHAKQLNCDVNSKRFKDAMKYLWMPRLAERIHARAGAVDDSGDYSNNDLSCVSGVTMATVANCFDGSPSMVTSSSSDSFTSESQDLKKINLHVHGDDEKMNSEDWMQEVDHEFWSTEIQPNNEQFQDQQLNGWVQGFSEGLSETLWSLEDIWKMQ</sequence>
<proteinExistence type="evidence at transcript level"/>
<feature type="chain" id="PRO_0000439822" description="Transcription factor JAMYB">
    <location>
        <begin position="1"/>
        <end position="285"/>
    </location>
</feature>
<feature type="domain" description="HTH myb-type 1" evidence="1">
    <location>
        <begin position="26"/>
        <end position="78"/>
    </location>
</feature>
<feature type="domain" description="HTH myb-type 2" evidence="1">
    <location>
        <begin position="79"/>
        <end position="133"/>
    </location>
</feature>
<feature type="DNA-binding region" description="H-T-H motif" evidence="1">
    <location>
        <begin position="54"/>
        <end position="78"/>
    </location>
</feature>
<feature type="DNA-binding region" description="H-T-H motif" evidence="1">
    <location>
        <begin position="106"/>
        <end position="129"/>
    </location>
</feature>
<gene>
    <name evidence="3" type="primary">JAMYB</name>
    <name evidence="6" type="ordered locus">Os11g0684000</name>
    <name evidence="5" type="ordered locus">LOC_Os11g45740</name>
</gene>
<accession>Q2QZJ8</accession>
<accession>Q0IR36</accession>
<accession>Q9ARI8</accession>
<protein>
    <recommendedName>
        <fullName evidence="4">Transcription factor JAMYB</fullName>
    </recommendedName>
    <alternativeName>
        <fullName evidence="3">OsJAMyb</fullName>
    </alternativeName>
</protein>
<name>JAMYB_ORYSJ</name>
<organism>
    <name type="scientific">Oryza sativa subsp. japonica</name>
    <name type="common">Rice</name>
    <dbReference type="NCBI Taxonomy" id="39947"/>
    <lineage>
        <taxon>Eukaryota</taxon>
        <taxon>Viridiplantae</taxon>
        <taxon>Streptophyta</taxon>
        <taxon>Embryophyta</taxon>
        <taxon>Tracheophyta</taxon>
        <taxon>Spermatophyta</taxon>
        <taxon>Magnoliopsida</taxon>
        <taxon>Liliopsida</taxon>
        <taxon>Poales</taxon>
        <taxon>Poaceae</taxon>
        <taxon>BOP clade</taxon>
        <taxon>Oryzoideae</taxon>
        <taxon>Oryzeae</taxon>
        <taxon>Oryzinae</taxon>
        <taxon>Oryza</taxon>
        <taxon>Oryza sativa</taxon>
    </lineage>
</organism>
<comment type="function">
    <text evidence="2">Probable transcription factor that may be involved in the jasmonate-dependent defense responses to the rice blast fungus Magnaporthe oryzae. Does not seem to function in the salicylic acid-dependent signaling pathway.</text>
</comment>
<comment type="subcellular location">
    <subcellularLocation>
        <location evidence="1">Nucleus</location>
    </subcellularLocation>
</comment>
<comment type="induction">
    <text evidence="2">Induced by jasmonate (JA), wounding and infection by the fungal pathogen Magnaporthe oryzae.</text>
</comment>
<keyword id="KW-0238">DNA-binding</keyword>
<keyword id="KW-0539">Nucleus</keyword>
<keyword id="KW-0611">Plant defense</keyword>
<keyword id="KW-1185">Reference proteome</keyword>
<keyword id="KW-0677">Repeat</keyword>
<keyword id="KW-0804">Transcription</keyword>
<keyword id="KW-0805">Transcription regulation</keyword>